<feature type="signal peptide" evidence="1">
    <location>
        <begin position="1"/>
        <end position="22"/>
    </location>
</feature>
<feature type="chain" id="PRO_0000392503" description="EPIDERMAL PATTERNING FACTOR-like protein 5">
    <location>
        <begin position="23"/>
        <end position="107"/>
    </location>
</feature>
<feature type="chain" id="PRO_0000430511" description="CHALLAH-LIKE1" evidence="8">
    <location>
        <begin position="57"/>
        <end position="107"/>
    </location>
</feature>
<feature type="disulfide bond" evidence="5">
    <location>
        <begin position="64"/>
        <end position="98"/>
    </location>
</feature>
<feature type="disulfide bond" evidence="5">
    <location>
        <begin position="68"/>
        <end position="74"/>
    </location>
</feature>
<feature type="disulfide bond" evidence="5">
    <location>
        <begin position="71"/>
        <end position="100"/>
    </location>
</feature>
<organism>
    <name type="scientific">Arabidopsis thaliana</name>
    <name type="common">Mouse-ear cress</name>
    <dbReference type="NCBI Taxonomy" id="3702"/>
    <lineage>
        <taxon>Eukaryota</taxon>
        <taxon>Viridiplantae</taxon>
        <taxon>Streptophyta</taxon>
        <taxon>Embryophyta</taxon>
        <taxon>Tracheophyta</taxon>
        <taxon>Spermatophyta</taxon>
        <taxon>Magnoliopsida</taxon>
        <taxon>eudicotyledons</taxon>
        <taxon>Gunneridae</taxon>
        <taxon>Pentapetalae</taxon>
        <taxon>rosids</taxon>
        <taxon>malvids</taxon>
        <taxon>Brassicales</taxon>
        <taxon>Brassicaceae</taxon>
        <taxon>Camelineae</taxon>
        <taxon>Arabidopsis</taxon>
    </lineage>
</organism>
<sequence length="107" mass="11505">MGVVLPTLIVYAFLLFFSSSSAASLQRPSGGLGQGKKEIARSGLPGQIVDQKRLGGPGSVPPMCRLKCGKCEPCKAVHVPIQPGLIMPLEYYPEAWRCKCGNKLFMP</sequence>
<gene>
    <name evidence="6" type="primary">EPFL5</name>
    <name evidence="7" type="synonym">CLL1</name>
    <name evidence="10" type="ordered locus">At3g22820</name>
    <name type="ORF">MWI23.19</name>
</gene>
<protein>
    <recommendedName>
        <fullName evidence="6">EPIDERMAL PATTERNING FACTOR-like protein 5</fullName>
        <shortName>EPF-like protein 5</shortName>
    </recommendedName>
    <component>
        <recommendedName>
            <fullName evidence="7">CHALLAH-LIKE1</fullName>
        </recommendedName>
    </component>
</protein>
<evidence type="ECO:0000255" key="1"/>
<evidence type="ECO:0000269" key="2">
    <source>
    </source>
</evidence>
<evidence type="ECO:0000269" key="3">
    <source>
    </source>
</evidence>
<evidence type="ECO:0000269" key="4">
    <source>
    </source>
</evidence>
<evidence type="ECO:0000269" key="5">
    <source>
    </source>
</evidence>
<evidence type="ECO:0000303" key="6">
    <source>
    </source>
</evidence>
<evidence type="ECO:0000303" key="7">
    <source>
    </source>
</evidence>
<evidence type="ECO:0000303" key="8">
    <source>
    </source>
</evidence>
<evidence type="ECO:0000305" key="9"/>
<evidence type="ECO:0000312" key="10">
    <source>
        <dbReference type="Araport" id="AT3G22820"/>
    </source>
</evidence>
<comment type="function">
    <text evidence="2 3 4 5">Controls stomatal patterning. Mediates differentiation of stomatal lineage cells to pavement cells and stomatal development inhibition (PubMed:23748792). TMM (AC Q9SSD1) functions to dampen or block CLL1 signaling. Acts as a growth-regulatory ligand for ERECTA family receptors. Promotes fruit growth and fertility (PubMed:22474391).</text>
</comment>
<comment type="subunit">
    <text evidence="3">Interacts with ERECTA.</text>
</comment>
<comment type="subcellular location">
    <subcellularLocation>
        <location evidence="9">Secreted</location>
    </subcellularLocation>
</comment>
<comment type="tissue specificity">
    <text evidence="3 4 5">Expressed asymetically in the hypocotyl, on the side proximal to the folded cotyledons at germination. Detected in developing flowers, the chalazal region of ovules and near the root apex, but not in inflorescence stems. Expressed in cotyledons, flowers, adult leaves and fruits (PubMed:23748792).</text>
</comment>
<comment type="similarity">
    <text evidence="9">Belongs to the plant cysteine rich small secretory peptide family. Epidermal patterning factor subfamily.</text>
</comment>
<reference key="1">
    <citation type="journal article" date="2000" name="DNA Res.">
        <title>Structural analysis of Arabidopsis thaliana chromosome 3. I. Sequence features of the regions of 4,504,864 bp covered by sixty P1 and TAC clones.</title>
        <authorList>
            <person name="Sato S."/>
            <person name="Nakamura Y."/>
            <person name="Kaneko T."/>
            <person name="Katoh T."/>
            <person name="Asamizu E."/>
            <person name="Tabata S."/>
        </authorList>
    </citation>
    <scope>NUCLEOTIDE SEQUENCE [LARGE SCALE GENOMIC DNA]</scope>
    <source>
        <strain>cv. Columbia</strain>
    </source>
</reference>
<reference key="2">
    <citation type="journal article" date="2017" name="Plant J.">
        <title>Araport11: a complete reannotation of the Arabidopsis thaliana reference genome.</title>
        <authorList>
            <person name="Cheng C.Y."/>
            <person name="Krishnakumar V."/>
            <person name="Chan A.P."/>
            <person name="Thibaud-Nissen F."/>
            <person name="Schobel S."/>
            <person name="Town C.D."/>
        </authorList>
    </citation>
    <scope>GENOME REANNOTATION</scope>
    <source>
        <strain>cv. Columbia</strain>
    </source>
</reference>
<reference key="3">
    <citation type="submission" date="2004-06" db="EMBL/GenBank/DDBJ databases">
        <title>Arabidopsis ORF clones.</title>
        <authorList>
            <person name="Cheuk R.F."/>
            <person name="Chen H."/>
            <person name="Kim C.J."/>
            <person name="Shinn P."/>
            <person name="Ecker J.R."/>
        </authorList>
    </citation>
    <scope>NUCLEOTIDE SEQUENCE [LARGE SCALE MRNA]</scope>
    <source>
        <strain>cv. Columbia</strain>
    </source>
</reference>
<reference key="4">
    <citation type="journal article" date="2009" name="Plant Cell Physiol.">
        <title>Epidermal cell density is autoregulated via a secretory peptide, EPIDERMAL PATTERNING FACTOR 2 in Arabidopsis leaves.</title>
        <authorList>
            <person name="Hara K."/>
            <person name="Yokoo T."/>
            <person name="Kajita R."/>
            <person name="Onishi T."/>
            <person name="Yahata S."/>
            <person name="Peterson K.M."/>
            <person name="Torii K.U."/>
            <person name="Kakimoto T."/>
        </authorList>
    </citation>
    <scope>FUNCTION</scope>
    <scope>GENE FAMILY</scope>
    <scope>NOMENCLATURE</scope>
</reference>
<reference key="5">
    <citation type="journal article" date="2011" name="Nat. Commun.">
        <title>The NMR structure of stomagen reveals the basis of stomatal density regulation by plant peptide hormones.</title>
        <authorList>
            <person name="Ohki S."/>
            <person name="Takeuchi M."/>
            <person name="Mori M."/>
        </authorList>
    </citation>
    <scope>3D-STRUCTURE MODELING</scope>
    <scope>DISULFIDE BOND</scope>
</reference>
<reference key="6">
    <citation type="journal article" date="2011" name="Plant Cell">
        <title>Generation of signaling specificity in Arabidopsis by spatially restricted buffering of ligand-receptor interactions.</title>
        <authorList>
            <person name="Abrash E.B."/>
            <person name="Davies K.A."/>
            <person name="Bergmann D.C."/>
        </authorList>
    </citation>
    <scope>FUNCTION</scope>
    <scope>TISSUE SPECIFICITY</scope>
    <scope>INTERACTION WITH ERECTA</scope>
</reference>
<reference key="7">
    <citation type="journal article" date="2012" name="Proc. Natl. Acad. Sci. U.S.A.">
        <title>Regulation of inflorescence architecture by intertissue layer ligand-receptor communication between endodermis and phloem.</title>
        <authorList>
            <person name="Uchida N."/>
            <person name="Lee J.S."/>
            <person name="Horst R.J."/>
            <person name="Lai H.H."/>
            <person name="Kajita R."/>
            <person name="Kakimoto T."/>
            <person name="Tasaka M."/>
            <person name="Torii K.U."/>
        </authorList>
    </citation>
    <scope>FUNCTION</scope>
    <scope>TISSUE SPECIFICITY</scope>
</reference>
<reference key="8">
    <citation type="journal article" date="2013" name="Biosci. Biotechnol. Biochem.">
        <title>EPIDERMAL PATTERNING FACTOR LIKE5 peptide represses stomatal development by inhibiting meristemoid maintenance in Arabidopsis thaliana.</title>
        <authorList>
            <person name="Niwa T."/>
            <person name="Kondo T."/>
            <person name="Nishizawa M."/>
            <person name="Kajita R."/>
            <person name="Kakimoto T."/>
            <person name="Ishiguro S."/>
        </authorList>
    </citation>
    <scope>FUNCTION</scope>
    <scope>TISSUE SPECIFICITY</scope>
    <scope>DISULFIDE BOND</scope>
    <source>
        <strain>cv. Columbia</strain>
    </source>
</reference>
<keyword id="KW-0217">Developmental protein</keyword>
<keyword id="KW-1015">Disulfide bond</keyword>
<keyword id="KW-1185">Reference proteome</keyword>
<keyword id="KW-0964">Secreted</keyword>
<keyword id="KW-0732">Signal</keyword>
<name>EPFL5_ARATH</name>
<proteinExistence type="evidence at protein level"/>
<accession>Q9LUH9</accession>
<dbReference type="EMBL" id="AB022223">
    <property type="protein sequence ID" value="BAB01257.1"/>
    <property type="molecule type" value="Genomic_DNA"/>
</dbReference>
<dbReference type="EMBL" id="CP002686">
    <property type="protein sequence ID" value="AEE76680.1"/>
    <property type="molecule type" value="Genomic_DNA"/>
</dbReference>
<dbReference type="EMBL" id="BT012590">
    <property type="protein sequence ID" value="AAT06409.1"/>
    <property type="molecule type" value="mRNA"/>
</dbReference>
<dbReference type="EMBL" id="BT014813">
    <property type="protein sequence ID" value="AAT41796.1"/>
    <property type="molecule type" value="mRNA"/>
</dbReference>
<dbReference type="RefSeq" id="NP_188921.1">
    <property type="nucleotide sequence ID" value="NM_113181.4"/>
</dbReference>
<dbReference type="FunCoup" id="Q9LUH9">
    <property type="interactions" value="5"/>
</dbReference>
<dbReference type="STRING" id="3702.Q9LUH9"/>
<dbReference type="PaxDb" id="3702-AT3G22820.1"/>
<dbReference type="EnsemblPlants" id="AT3G22820.1">
    <property type="protein sequence ID" value="AT3G22820.1"/>
    <property type="gene ID" value="AT3G22820"/>
</dbReference>
<dbReference type="GeneID" id="821853"/>
<dbReference type="Gramene" id="AT3G22820.1">
    <property type="protein sequence ID" value="AT3G22820.1"/>
    <property type="gene ID" value="AT3G22820"/>
</dbReference>
<dbReference type="KEGG" id="ath:AT3G22820"/>
<dbReference type="Araport" id="AT3G22820"/>
<dbReference type="TAIR" id="AT3G22820">
    <property type="gene designation" value="CLL1"/>
</dbReference>
<dbReference type="eggNOG" id="ENOG502S3SX">
    <property type="taxonomic scope" value="Eukaryota"/>
</dbReference>
<dbReference type="HOGENOM" id="CLU_135272_3_3_1"/>
<dbReference type="InParanoid" id="Q9LUH9"/>
<dbReference type="OMA" id="PTLIVYA"/>
<dbReference type="OrthoDB" id="1937916at2759"/>
<dbReference type="PhylomeDB" id="Q9LUH9"/>
<dbReference type="PRO" id="PR:Q9LUH9"/>
<dbReference type="Proteomes" id="UP000006548">
    <property type="component" value="Chromosome 3"/>
</dbReference>
<dbReference type="ExpressionAtlas" id="Q9LUH9">
    <property type="expression patterns" value="baseline and differential"/>
</dbReference>
<dbReference type="GO" id="GO:0005576">
    <property type="term" value="C:extracellular region"/>
    <property type="evidence" value="ECO:0007669"/>
    <property type="project" value="UniProtKB-SubCell"/>
</dbReference>
<dbReference type="GO" id="GO:0010052">
    <property type="term" value="P:guard cell differentiation"/>
    <property type="evidence" value="ECO:0000315"/>
    <property type="project" value="UniProtKB"/>
</dbReference>
<dbReference type="GO" id="GO:0010374">
    <property type="term" value="P:stomatal complex development"/>
    <property type="evidence" value="ECO:0000315"/>
    <property type="project" value="UniProtKB"/>
</dbReference>
<dbReference type="InterPro" id="IPR039455">
    <property type="entry name" value="EPFL"/>
</dbReference>
<dbReference type="PANTHER" id="PTHR33109">
    <property type="entry name" value="EPIDERMAL PATTERNING FACTOR-LIKE PROTEIN 4"/>
    <property type="match status" value="1"/>
</dbReference>
<dbReference type="PANTHER" id="PTHR33109:SF55">
    <property type="entry name" value="EPIDERMAL PATTERNING FACTOR-LIKE PROTEIN 4-RELATED"/>
    <property type="match status" value="1"/>
</dbReference>
<dbReference type="Pfam" id="PF17181">
    <property type="entry name" value="EPF"/>
    <property type="match status" value="1"/>
</dbReference>